<evidence type="ECO:0000250" key="1"/>
<evidence type="ECO:0000250" key="2">
    <source>
        <dbReference type="UniProtKB" id="Q8IZP0"/>
    </source>
</evidence>
<evidence type="ECO:0000250" key="3">
    <source>
        <dbReference type="UniProtKB" id="Q9QZM5"/>
    </source>
</evidence>
<evidence type="ECO:0000255" key="4">
    <source>
        <dbReference type="PROSITE-ProRule" id="PRU00192"/>
    </source>
</evidence>
<evidence type="ECO:0000255" key="5">
    <source>
        <dbReference type="PROSITE-ProRule" id="PRU00202"/>
    </source>
</evidence>
<evidence type="ECO:0000256" key="6">
    <source>
        <dbReference type="SAM" id="MobiDB-lite"/>
    </source>
</evidence>
<evidence type="ECO:0000269" key="7">
    <source>
    </source>
</evidence>
<evidence type="ECO:0000269" key="8">
    <source>
    </source>
</evidence>
<evidence type="ECO:0000269" key="9">
    <source>
    </source>
</evidence>
<evidence type="ECO:0000269" key="10">
    <source>
    </source>
</evidence>
<evidence type="ECO:0000269" key="11">
    <source>
    </source>
</evidence>
<evidence type="ECO:0000269" key="12">
    <source>
    </source>
</evidence>
<evidence type="ECO:0000269" key="13">
    <source>
    </source>
</evidence>
<evidence type="ECO:0000303" key="14">
    <source>
    </source>
</evidence>
<evidence type="ECO:0000303" key="15">
    <source>
    </source>
</evidence>
<evidence type="ECO:0000303" key="16">
    <source>
    </source>
</evidence>
<evidence type="ECO:0000303" key="17">
    <source>
    </source>
</evidence>
<evidence type="ECO:0000303" key="18">
    <source>
    </source>
</evidence>
<evidence type="ECO:0000305" key="19"/>
<evidence type="ECO:0000312" key="20">
    <source>
        <dbReference type="MGI" id="MGI:104913"/>
    </source>
</evidence>
<evidence type="ECO:0007744" key="21">
    <source>
    </source>
</evidence>
<evidence type="ECO:0007744" key="22">
    <source>
    </source>
</evidence>
<evidence type="ECO:0007744" key="23">
    <source>
    </source>
</evidence>
<evidence type="ECO:0007744" key="24">
    <source>
    </source>
</evidence>
<feature type="initiator methionine" description="Removed" evidence="2">
    <location>
        <position position="1"/>
    </location>
</feature>
<feature type="chain" id="PRO_0000191788" description="Abl interactor 1">
    <location>
        <begin position="2"/>
        <end position="481"/>
    </location>
</feature>
<feature type="domain" description="t-SNARE coiled-coil homology" evidence="5">
    <location>
        <begin position="45"/>
        <end position="107"/>
    </location>
</feature>
<feature type="domain" description="SH3" evidence="4">
    <location>
        <begin position="419"/>
        <end position="478"/>
    </location>
</feature>
<feature type="region of interest" description="Required for binding to WASF1">
    <location>
        <begin position="18"/>
        <end position="79"/>
    </location>
</feature>
<feature type="region of interest" description="Disordered" evidence="6">
    <location>
        <begin position="158"/>
        <end position="285"/>
    </location>
</feature>
<feature type="region of interest" description="Disordered" evidence="6">
    <location>
        <begin position="318"/>
        <end position="348"/>
    </location>
</feature>
<feature type="region of interest" description="Disordered" evidence="6">
    <location>
        <begin position="361"/>
        <end position="392"/>
    </location>
</feature>
<feature type="compositionally biased region" description="Polar residues" evidence="6">
    <location>
        <begin position="161"/>
        <end position="175"/>
    </location>
</feature>
<feature type="compositionally biased region" description="Polar residues" evidence="6">
    <location>
        <begin position="222"/>
        <end position="235"/>
    </location>
</feature>
<feature type="compositionally biased region" description="Low complexity" evidence="6">
    <location>
        <begin position="248"/>
        <end position="258"/>
    </location>
</feature>
<feature type="compositionally biased region" description="Low complexity" evidence="6">
    <location>
        <begin position="272"/>
        <end position="282"/>
    </location>
</feature>
<feature type="compositionally biased region" description="Pro residues" evidence="6">
    <location>
        <begin position="366"/>
        <end position="376"/>
    </location>
</feature>
<feature type="compositionally biased region" description="Pro residues" evidence="6">
    <location>
        <begin position="383"/>
        <end position="392"/>
    </location>
</feature>
<feature type="modified residue" description="N-acetylalanine" evidence="2">
    <location>
        <position position="2"/>
    </location>
</feature>
<feature type="modified residue" description="Phosphotyrosine" evidence="3">
    <location>
        <position position="53"/>
    </location>
</feature>
<feature type="modified residue" description="Phosphothreonine" evidence="2">
    <location>
        <position position="174"/>
    </location>
</feature>
<feature type="modified residue" description="Phosphothreonine" evidence="2">
    <location>
        <position position="178"/>
    </location>
</feature>
<feature type="modified residue" description="Phosphoserine" evidence="22 23">
    <location>
        <position position="183"/>
    </location>
</feature>
<feature type="modified residue" description="Phosphoserine" evidence="2">
    <location>
        <position position="187"/>
    </location>
</feature>
<feature type="modified residue" description="Phosphotyrosine" evidence="22">
    <location>
        <position position="213"/>
    </location>
</feature>
<feature type="modified residue" description="Phosphothreonine" evidence="24">
    <location>
        <position position="215"/>
    </location>
</feature>
<feature type="modified residue" description="Phosphoserine" evidence="2">
    <location>
        <position position="216"/>
    </location>
</feature>
<feature type="modified residue" description="Phosphoserine" evidence="2">
    <location>
        <position position="222"/>
    </location>
</feature>
<feature type="modified residue" description="Phosphoserine" evidence="2">
    <location>
        <position position="225"/>
    </location>
</feature>
<feature type="modified residue" description="Phosphoserine" evidence="2">
    <location>
        <position position="292"/>
    </location>
</feature>
<feature type="modified residue" description="Phosphoserine" evidence="2">
    <location>
        <position position="296"/>
    </location>
</feature>
<feature type="modified residue" description="Phosphotyrosine" evidence="21">
    <location>
        <position position="428"/>
    </location>
</feature>
<feature type="modified residue" description="Phosphoserine" evidence="3">
    <location>
        <position position="439"/>
    </location>
</feature>
<feature type="modified residue" description="Phosphothreonine" evidence="2">
    <location>
        <position position="480"/>
    </location>
</feature>
<feature type="splice variant" id="VSP_010756" description="In isoform 2, isoform 3, isoform 4 and isoform 5." evidence="14 15 16 17 18">
    <location>
        <begin position="154"/>
        <end position="158"/>
    </location>
</feature>
<feature type="splice variant" id="VSP_022636" description="In isoform 5." evidence="17">
    <original>AAPGAAPGSQYGTMTRQISRHNSTTSSTSSGGYRRTPSVAAQFSAQPHVNGGPLYSQNSISVAPPPPPMPQLTPQIPLTGFVARVQENI</original>
    <variation>V</variation>
    <location>
        <begin position="274"/>
        <end position="362"/>
    </location>
</feature>
<feature type="splice variant" id="VSP_010757" description="In isoform 2 and isoform 4." evidence="14 15 18">
    <location>
        <position position="274"/>
    </location>
</feature>
<feature type="splice variant" id="VSP_010758" description="In isoform 2." evidence="14">
    <location>
        <begin position="333"/>
        <end position="361"/>
    </location>
</feature>
<feature type="sequence conflict" description="In Ref. 4; AAH04657." evidence="19" ref="4">
    <original>A</original>
    <variation>T</variation>
    <location>
        <position position="313"/>
    </location>
</feature>
<dbReference type="EMBL" id="AF420251">
    <property type="protein sequence ID" value="AAL16036.1"/>
    <property type="molecule type" value="mRNA"/>
</dbReference>
<dbReference type="EMBL" id="AY033645">
    <property type="protein sequence ID" value="AAK59381.1"/>
    <property type="molecule type" value="mRNA"/>
</dbReference>
<dbReference type="EMBL" id="AK034476">
    <property type="protein sequence ID" value="BAC28722.1"/>
    <property type="molecule type" value="mRNA"/>
</dbReference>
<dbReference type="EMBL" id="AK152061">
    <property type="protein sequence ID" value="BAE30917.1"/>
    <property type="molecule type" value="mRNA"/>
</dbReference>
<dbReference type="EMBL" id="AK152184">
    <property type="protein sequence ID" value="BAE31015.1"/>
    <property type="molecule type" value="mRNA"/>
</dbReference>
<dbReference type="EMBL" id="AK151026">
    <property type="protein sequence ID" value="BAE30044.1"/>
    <property type="molecule type" value="mRNA"/>
</dbReference>
<dbReference type="EMBL" id="BC004657">
    <property type="protein sequence ID" value="AAH04657.1"/>
    <property type="molecule type" value="mRNA"/>
</dbReference>
<dbReference type="EMBL" id="U17698">
    <property type="protein sequence ID" value="AAB00373.1"/>
    <property type="status" value="ALT_SEQ"/>
    <property type="molecule type" value="mRNA"/>
</dbReference>
<dbReference type="CCDS" id="CCDS38058.1">
    <molecule id="Q8CBW3-5"/>
</dbReference>
<dbReference type="CCDS" id="CCDS38059.1">
    <molecule id="Q8CBW3-3"/>
</dbReference>
<dbReference type="CCDS" id="CCDS38060.1">
    <molecule id="Q8CBW3-2"/>
</dbReference>
<dbReference type="CCDS" id="CCDS38061.1">
    <molecule id="Q8CBW3-1"/>
</dbReference>
<dbReference type="CCDS" id="CCDS50513.1">
    <molecule id="Q8CBW3-4"/>
</dbReference>
<dbReference type="RefSeq" id="NP_001070658.1">
    <molecule id="Q8CBW3-1"/>
    <property type="nucleotide sequence ID" value="NM_001077190.4"/>
</dbReference>
<dbReference type="RefSeq" id="NP_001070660.1">
    <molecule id="Q8CBW3-2"/>
    <property type="nucleotide sequence ID" value="NM_001077192.4"/>
</dbReference>
<dbReference type="RefSeq" id="NP_001070661.1">
    <molecule id="Q8CBW3-5"/>
    <property type="nucleotide sequence ID" value="NM_001077193.4"/>
</dbReference>
<dbReference type="RefSeq" id="NP_031406.2">
    <molecule id="Q8CBW3-4"/>
    <property type="nucleotide sequence ID" value="NM_007380.5"/>
</dbReference>
<dbReference type="RefSeq" id="NP_666106.1">
    <molecule id="Q8CBW3-3"/>
    <property type="nucleotide sequence ID" value="NM_145994.4"/>
</dbReference>
<dbReference type="SMR" id="Q8CBW3"/>
<dbReference type="BioGRID" id="197905">
    <property type="interactions" value="34"/>
</dbReference>
<dbReference type="CORUM" id="Q8CBW3"/>
<dbReference type="DIP" id="DIP-29534N"/>
<dbReference type="FunCoup" id="Q8CBW3">
    <property type="interactions" value="2748"/>
</dbReference>
<dbReference type="IntAct" id="Q8CBW3">
    <property type="interactions" value="34"/>
</dbReference>
<dbReference type="MINT" id="Q8CBW3"/>
<dbReference type="STRING" id="10090.ENSMUSP00000118491"/>
<dbReference type="GlyGen" id="Q8CBW3">
    <property type="glycosylation" value="3 sites, 1 N-linked glycan (1 site), 1 O-linked glycan (1 site)"/>
</dbReference>
<dbReference type="iPTMnet" id="Q8CBW3"/>
<dbReference type="PhosphoSitePlus" id="Q8CBW3"/>
<dbReference type="jPOST" id="Q8CBW3"/>
<dbReference type="PaxDb" id="10090-ENSMUSP00000118491"/>
<dbReference type="ProteomicsDB" id="286057">
    <molecule id="Q8CBW3-1"/>
</dbReference>
<dbReference type="ProteomicsDB" id="286058">
    <molecule id="Q8CBW3-2"/>
</dbReference>
<dbReference type="ProteomicsDB" id="286059">
    <molecule id="Q8CBW3-3"/>
</dbReference>
<dbReference type="ProteomicsDB" id="286060">
    <molecule id="Q8CBW3-4"/>
</dbReference>
<dbReference type="ProteomicsDB" id="286061">
    <molecule id="Q8CBW3-5"/>
</dbReference>
<dbReference type="Pumba" id="Q8CBW3"/>
<dbReference type="Antibodypedia" id="3646">
    <property type="antibodies" value="355 antibodies from 40 providers"/>
</dbReference>
<dbReference type="DNASU" id="11308"/>
<dbReference type="Ensembl" id="ENSMUST00000114544.10">
    <molecule id="Q8CBW3-5"/>
    <property type="protein sequence ID" value="ENSMUSP00000110191.4"/>
    <property type="gene ID" value="ENSMUSG00000058835.15"/>
</dbReference>
<dbReference type="Ensembl" id="ENSMUST00000123948.8">
    <molecule id="Q8CBW3-1"/>
    <property type="protein sequence ID" value="ENSMUSP00000118491.2"/>
    <property type="gene ID" value="ENSMUSG00000058835.15"/>
</dbReference>
<dbReference type="Ensembl" id="ENSMUST00000126112.8">
    <molecule id="Q8CBW3-3"/>
    <property type="protein sequence ID" value="ENSMUSP00000117335.2"/>
    <property type="gene ID" value="ENSMUSG00000058835.15"/>
</dbReference>
<dbReference type="Ensembl" id="ENSMUST00000140164.8">
    <molecule id="Q8CBW3-4"/>
    <property type="protein sequence ID" value="ENSMUSP00000120462.2"/>
    <property type="gene ID" value="ENSMUSG00000058835.15"/>
</dbReference>
<dbReference type="Ensembl" id="ENSMUST00000149719.8">
    <molecule id="Q8CBW3-2"/>
    <property type="protein sequence ID" value="ENSMUSP00000120621.2"/>
    <property type="gene ID" value="ENSMUSG00000058835.15"/>
</dbReference>
<dbReference type="GeneID" id="11308"/>
<dbReference type="KEGG" id="mmu:11308"/>
<dbReference type="UCSC" id="uc008ins.2">
    <molecule id="Q8CBW3-1"/>
    <property type="organism name" value="mouse"/>
</dbReference>
<dbReference type="UCSC" id="uc008inw.2">
    <molecule id="Q8CBW3-5"/>
    <property type="organism name" value="mouse"/>
</dbReference>
<dbReference type="AGR" id="MGI:104913"/>
<dbReference type="CTD" id="10006"/>
<dbReference type="MGI" id="MGI:104913">
    <property type="gene designation" value="Abi1"/>
</dbReference>
<dbReference type="VEuPathDB" id="HostDB:ENSMUSG00000058835"/>
<dbReference type="eggNOG" id="KOG2546">
    <property type="taxonomic scope" value="Eukaryota"/>
</dbReference>
<dbReference type="GeneTree" id="ENSGT00940000154811"/>
<dbReference type="HOGENOM" id="CLU_035421_0_0_1"/>
<dbReference type="InParanoid" id="Q8CBW3"/>
<dbReference type="OMA" id="HGVKEWH"/>
<dbReference type="OrthoDB" id="2159336at2759"/>
<dbReference type="PhylomeDB" id="Q8CBW3"/>
<dbReference type="TreeFam" id="TF314303"/>
<dbReference type="Reactome" id="R-MMU-2029482">
    <property type="pathway name" value="Regulation of actin dynamics for phagocytic cup formation"/>
</dbReference>
<dbReference type="Reactome" id="R-MMU-4420097">
    <property type="pathway name" value="VEGFA-VEGFR2 Pathway"/>
</dbReference>
<dbReference type="Reactome" id="R-MMU-5663213">
    <property type="pathway name" value="RHO GTPases Activate WASPs and WAVEs"/>
</dbReference>
<dbReference type="Reactome" id="R-MMU-9013149">
    <property type="pathway name" value="RAC1 GTPase cycle"/>
</dbReference>
<dbReference type="Reactome" id="R-MMU-9013404">
    <property type="pathway name" value="RAC2 GTPase cycle"/>
</dbReference>
<dbReference type="Reactome" id="R-MMU-9013423">
    <property type="pathway name" value="RAC3 GTPase cycle"/>
</dbReference>
<dbReference type="BioGRID-ORCS" id="11308">
    <property type="hits" value="4 hits in 78 CRISPR screens"/>
</dbReference>
<dbReference type="CD-CODE" id="CE726F99">
    <property type="entry name" value="Postsynaptic density"/>
</dbReference>
<dbReference type="ChiTaRS" id="Abi1">
    <property type="organism name" value="mouse"/>
</dbReference>
<dbReference type="PRO" id="PR:Q8CBW3"/>
<dbReference type="Proteomes" id="UP000000589">
    <property type="component" value="Chromosome 2"/>
</dbReference>
<dbReference type="RNAct" id="Q8CBW3">
    <property type="molecule type" value="protein"/>
</dbReference>
<dbReference type="Bgee" id="ENSMUSG00000058835">
    <property type="expression patterns" value="Expressed in mesenteric lymph node and 245 other cell types or tissues"/>
</dbReference>
<dbReference type="ExpressionAtlas" id="Q8CBW3">
    <property type="expression patterns" value="baseline and differential"/>
</dbReference>
<dbReference type="GO" id="GO:0031252">
    <property type="term" value="C:cell leading edge"/>
    <property type="evidence" value="ECO:0000314"/>
    <property type="project" value="MGI"/>
</dbReference>
<dbReference type="GO" id="GO:0005856">
    <property type="term" value="C:cytoskeleton"/>
    <property type="evidence" value="ECO:0007669"/>
    <property type="project" value="UniProtKB-SubCell"/>
</dbReference>
<dbReference type="GO" id="GO:0032433">
    <property type="term" value="C:filopodium tip"/>
    <property type="evidence" value="ECO:0007669"/>
    <property type="project" value="Ensembl"/>
</dbReference>
<dbReference type="GO" id="GO:0030426">
    <property type="term" value="C:growth cone"/>
    <property type="evidence" value="ECO:0007669"/>
    <property type="project" value="UniProtKB-SubCell"/>
</dbReference>
<dbReference type="GO" id="GO:0030027">
    <property type="term" value="C:lamellipodium"/>
    <property type="evidence" value="ECO:0000314"/>
    <property type="project" value="MGI"/>
</dbReference>
<dbReference type="GO" id="GO:0043005">
    <property type="term" value="C:neuron projection"/>
    <property type="evidence" value="ECO:0000314"/>
    <property type="project" value="BHF-UCL"/>
</dbReference>
<dbReference type="GO" id="GO:0005634">
    <property type="term" value="C:nucleus"/>
    <property type="evidence" value="ECO:0007669"/>
    <property type="project" value="UniProtKB-SubCell"/>
</dbReference>
<dbReference type="GO" id="GO:0014069">
    <property type="term" value="C:postsynaptic density"/>
    <property type="evidence" value="ECO:0007669"/>
    <property type="project" value="UniProtKB-SubCell"/>
</dbReference>
<dbReference type="GO" id="GO:0031209">
    <property type="term" value="C:SCAR complex"/>
    <property type="evidence" value="ECO:0000314"/>
    <property type="project" value="ARUK-UCL"/>
</dbReference>
<dbReference type="GO" id="GO:0030296">
    <property type="term" value="F:protein tyrosine kinase activator activity"/>
    <property type="evidence" value="ECO:0000314"/>
    <property type="project" value="MGI"/>
</dbReference>
<dbReference type="GO" id="GO:0017124">
    <property type="term" value="F:SH3 domain binding"/>
    <property type="evidence" value="ECO:0007669"/>
    <property type="project" value="Ensembl"/>
</dbReference>
<dbReference type="GO" id="GO:0035591">
    <property type="term" value="F:signaling adaptor activity"/>
    <property type="evidence" value="ECO:0000314"/>
    <property type="project" value="ARUK-UCL"/>
</dbReference>
<dbReference type="GO" id="GO:0048813">
    <property type="term" value="P:dendrite morphogenesis"/>
    <property type="evidence" value="ECO:0000314"/>
    <property type="project" value="MGI"/>
</dbReference>
<dbReference type="GO" id="GO:0072673">
    <property type="term" value="P:lamellipodium morphogenesis"/>
    <property type="evidence" value="ECO:0000315"/>
    <property type="project" value="MGI"/>
</dbReference>
<dbReference type="GO" id="GO:0035855">
    <property type="term" value="P:megakaryocyte development"/>
    <property type="evidence" value="ECO:0000315"/>
    <property type="project" value="MGI"/>
</dbReference>
<dbReference type="GO" id="GO:0001756">
    <property type="term" value="P:somitogenesis"/>
    <property type="evidence" value="ECO:0000315"/>
    <property type="project" value="MGI"/>
</dbReference>
<dbReference type="CDD" id="cd11971">
    <property type="entry name" value="SH3_Abi1"/>
    <property type="match status" value="1"/>
</dbReference>
<dbReference type="FunFam" id="2.30.30.40:FF:000002">
    <property type="entry name" value="abl interactor 1 isoform X1"/>
    <property type="match status" value="1"/>
</dbReference>
<dbReference type="Gene3D" id="6.10.140.1620">
    <property type="match status" value="1"/>
</dbReference>
<dbReference type="Gene3D" id="2.30.30.40">
    <property type="entry name" value="SH3 Domains"/>
    <property type="match status" value="1"/>
</dbReference>
<dbReference type="InterPro" id="IPR028457">
    <property type="entry name" value="ABI"/>
</dbReference>
<dbReference type="InterPro" id="IPR035725">
    <property type="entry name" value="Abi1_SH3"/>
</dbReference>
<dbReference type="InterPro" id="IPR012849">
    <property type="entry name" value="Abl-interactor_HHR_dom"/>
</dbReference>
<dbReference type="InterPro" id="IPR036028">
    <property type="entry name" value="SH3-like_dom_sf"/>
</dbReference>
<dbReference type="InterPro" id="IPR001452">
    <property type="entry name" value="SH3_domain"/>
</dbReference>
<dbReference type="InterPro" id="IPR000727">
    <property type="entry name" value="T_SNARE_dom"/>
</dbReference>
<dbReference type="PANTHER" id="PTHR10460:SF2">
    <property type="entry name" value="ABL INTERACTOR 1"/>
    <property type="match status" value="1"/>
</dbReference>
<dbReference type="PANTHER" id="PTHR10460">
    <property type="entry name" value="ABL INTERACTOR FAMILY MEMBER"/>
    <property type="match status" value="1"/>
</dbReference>
<dbReference type="Pfam" id="PF07815">
    <property type="entry name" value="Abi_HHR"/>
    <property type="match status" value="1"/>
</dbReference>
<dbReference type="Pfam" id="PF00018">
    <property type="entry name" value="SH3_1"/>
    <property type="match status" value="1"/>
</dbReference>
<dbReference type="PRINTS" id="PR00499">
    <property type="entry name" value="P67PHOX"/>
</dbReference>
<dbReference type="PRINTS" id="PR00452">
    <property type="entry name" value="SH3DOMAIN"/>
</dbReference>
<dbReference type="SMART" id="SM00326">
    <property type="entry name" value="SH3"/>
    <property type="match status" value="1"/>
</dbReference>
<dbReference type="SUPFAM" id="SSF50044">
    <property type="entry name" value="SH3-domain"/>
    <property type="match status" value="1"/>
</dbReference>
<dbReference type="PROSITE" id="PS50002">
    <property type="entry name" value="SH3"/>
    <property type="match status" value="1"/>
</dbReference>
<dbReference type="PROSITE" id="PS50192">
    <property type="entry name" value="T_SNARE"/>
    <property type="match status" value="1"/>
</dbReference>
<keyword id="KW-0007">Acetylation</keyword>
<keyword id="KW-0025">Alternative splicing</keyword>
<keyword id="KW-0966">Cell projection</keyword>
<keyword id="KW-0175">Coiled coil</keyword>
<keyword id="KW-0963">Cytoplasm</keyword>
<keyword id="KW-0206">Cytoskeleton</keyword>
<keyword id="KW-0539">Nucleus</keyword>
<keyword id="KW-0597">Phosphoprotein</keyword>
<keyword id="KW-1185">Reference proteome</keyword>
<keyword id="KW-0728">SH3 domain</keyword>
<keyword id="KW-0770">Synapse</keyword>
<gene>
    <name evidence="20" type="primary">Abi1</name>
    <name type="synonym">Ssh3bp1</name>
</gene>
<comment type="function">
    <text evidence="7 9 10 11 12 13">May act in negative regulation of cell growth and transformation by interacting with nonreceptor tyrosine kinases ABL1 and/or ABL2. In vitro, at least isoform 2 and isoform 4 suppress the transforming activity of Abelson murine leukemia virus (v-Abl) after overexpression in fibroblasts. May play a role in regulation EGF-induced Erk pathway activation. Involved in cytoskeletal reorganization and EGFR signaling. Together with EPS8 participates in transduction of signals from Ras to Rac. In vitro, a trimeric complex of ABI1, EPS8 and SOS1 exhibits Rac specific guanine nucleotide exchange factor (GEF) activity and ABI1 seems to act as an adapter in the complex. Regulates ABL1/c-Abl-mediated phosphorylation of ENAH. Recruits WASF1 to lamellipodia and there seems to regulate WASF1 protein level. In brain, seems to regulate the dendritic outgrowth and branching as well as to determine the shape and number of synaptic contacts of developing neurons.</text>
</comment>
<comment type="subunit">
    <text evidence="1 2 7 10 11 12 13">Interacts with ENAH, Abelson murine leukemia virus V-ABL, ABL1, STX1A, SNAP25, VAMP2, and through its N-terminus with WASF1. Part of a complex consisting of ABI1, STX1A and SNAP25. Part of a complex consisting of ABI1, EPS8 and SOS1. Interacts with EPS8, SOS1, SOS2, GRB2, SPTA1, and the first SH3 domain of NCK1 (By similarity). Component of the WAVE2 complex composed of ABI1, CYFIP1/SRA1, NCKAP1/NAP1 (NCKAP1l/HEM1 in hematopoietic cells) and WASF2/WAVE2. Interacts (via SH3 domain) with SHANK2 and SHANK3, but not SHANK1; the interaction is direct. Interacts with the heterodimer MYC:MAX; the interaction may enhance MYC:MAX transcriptional activity. Interacts with FNBP1L (via the SH3 domain), WASF2, and CDC42, but only in the presence of FNBP1L (By similarity).</text>
</comment>
<comment type="interaction">
    <interactant intactId="EBI-375511">
        <id>Q8CBW3</id>
    </interactant>
    <interactant intactId="EBI-6550123">
        <id>Q9Z207</id>
        <label>Diaph3</label>
    </interactant>
    <organismsDiffer>false</organismsDiffer>
    <experiments>2</experiments>
</comment>
<comment type="interaction">
    <interactant intactId="EBI-375511">
        <id>Q8CBW3</id>
    </interactant>
    <interactant intactId="EBI-375596">
        <id>Q08509</id>
        <label>Eps8</label>
    </interactant>
    <organismsDiffer>false</organismsDiffer>
    <experiments>3</experiments>
</comment>
<comment type="interaction">
    <interactant intactId="EBI-375511">
        <id>Q8CBW3</id>
    </interactant>
    <interactant intactId="EBI-395573">
        <id>Q02384</id>
        <label>Sos2</label>
    </interactant>
    <organismsDiffer>false</organismsDiffer>
    <experiments>2</experiments>
</comment>
<comment type="interaction">
    <interactant intactId="EBI-375511">
        <id>Q8CBW3</id>
    </interactant>
    <interactant intactId="EBI-643162">
        <id>Q8BH43</id>
        <label>Wasf2</label>
    </interactant>
    <organismsDiffer>false</organismsDiffer>
    <experiments>2</experiments>
</comment>
<comment type="subcellular location">
    <subcellularLocation>
        <location evidence="1">Cytoplasm</location>
    </subcellularLocation>
    <subcellularLocation>
        <location evidence="1">Nucleus</location>
    </subcellularLocation>
    <subcellularLocation>
        <location evidence="1">Cell projection</location>
        <location evidence="1">Lamellipodium</location>
    </subcellularLocation>
    <subcellularLocation>
        <location evidence="1">Cell projection</location>
        <location evidence="1">Filopodium</location>
    </subcellularLocation>
    <subcellularLocation>
        <location evidence="1">Cell projection</location>
        <location evidence="1">Growth cone</location>
    </subcellularLocation>
    <subcellularLocation>
        <location evidence="1">Postsynaptic density</location>
    </subcellularLocation>
    <subcellularLocation>
        <location evidence="1">Cytoplasm</location>
        <location evidence="1">Cytoskeleton</location>
    </subcellularLocation>
    <text evidence="1">Localized to protruding lamellipodia and filopodia tips. Also localized to neuronal growth cones and synaptosomes. May shuttle from the postsynaptic densities to the nucleus (By similarity).</text>
</comment>
<comment type="alternative products">
    <event type="alternative splicing"/>
    <isoform>
        <id>Q8CBW3-1</id>
        <name>1</name>
        <sequence type="displayed"/>
    </isoform>
    <isoform>
        <id>Q8CBW3-2</id>
        <name>2</name>
        <name>short</name>
        <sequence type="described" ref="VSP_010756 VSP_010757 VSP_010758"/>
    </isoform>
    <isoform>
        <id>Q8CBW3-3</id>
        <name>3</name>
        <sequence type="described" ref="VSP_010756"/>
    </isoform>
    <isoform>
        <id>Q8CBW3-4</id>
        <name>4</name>
        <name>long</name>
        <sequence type="described" ref="VSP_010756 VSP_010757"/>
    </isoform>
    <isoform>
        <id>Q8CBW3-5</id>
        <name>5</name>
        <sequence type="described" ref="VSP_010756 VSP_022636"/>
    </isoform>
</comment>
<comment type="tissue specificity">
    <text evidence="8 13">Widely expressed with highest levels in bone marrow, spleen, brain, testes, and embryonic brain. In adult brain prominently expressed in the neocortex, hippocampus and dentate gyrus.</text>
</comment>
<comment type="developmental stage">
    <text evidence="8">Detected at 10 dpc and 12 dpc in developing brain, but does not appear more prominent in the neuroepithelium compared to the surrounding tissue.</text>
</comment>
<comment type="domain">
    <text>The t-SNARE coiled-coil homology domain is necessary and sufficient for interaction with STX1A.</text>
</comment>
<comment type="PTM">
    <text evidence="1">Phosphorylated on tyrosine residues after serum stimulation or induction by v-Abl. Seems to be phosphorylated at Tyr-53 by ABL1, required for nuclear but not for synaptic localization (By similarity).</text>
</comment>
<comment type="similarity">
    <text evidence="19">Belongs to the ABI family.</text>
</comment>
<protein>
    <recommendedName>
        <fullName>Abl interactor 1</fullName>
    </recommendedName>
    <alternativeName>
        <fullName>Abelson interactor 1</fullName>
        <shortName>Abi-1</shortName>
    </alternativeName>
    <alternativeName>
        <fullName>Ablphilin-1</fullName>
    </alternativeName>
    <alternativeName>
        <fullName>Eps8 SH3 domain-binding protein</fullName>
        <shortName>Eps8-binding protein</shortName>
    </alternativeName>
    <alternativeName>
        <fullName>Spectrin SH3 domain-binding protein 1</fullName>
    </alternativeName>
    <alternativeName>
        <fullName>e3B1</fullName>
    </alternativeName>
</protein>
<proteinExistence type="evidence at protein level"/>
<accession>Q8CBW3</accession>
<accession>Q3U8V0</accession>
<accession>Q60747</accession>
<accession>Q91ZM5</accession>
<accession>Q923I9</accession>
<accession>Q99KH4</accession>
<reference key="1">
    <citation type="journal article" date="2001" name="Oncogene">
        <title>Inhibition of v-Abl transformation in 3T3 cells overexpressing different forms of the Abelson interactor protein Abi-1.</title>
        <authorList>
            <person name="Ikeguchi A."/>
            <person name="Yang H.-Y."/>
            <person name="Gao G."/>
            <person name="Goff S.P."/>
        </authorList>
    </citation>
    <scope>NUCLEOTIDE SEQUENCE [MRNA] (ISOFORM 4)</scope>
    <scope>ALTERNATIVE SPLICING (ISOFORM 2)</scope>
    <scope>FUNCTION</scope>
    <source>
        <strain>BALB/cJ</strain>
    </source>
</reference>
<reference key="2">
    <citation type="journal article" date="2001" name="Genes Chromosomes Cancer">
        <title>t(10;11)-acute leukemias with MLL-AF10 and MLL-ABI1 chimeric transcripts: specific expression patterns of ABI1 gene in leukemia and solid tumor cell lines.</title>
        <authorList>
            <person name="Shibuya N."/>
            <person name="Taki T."/>
            <person name="Mugishima H."/>
            <person name="Chin M."/>
            <person name="Tsuchida M."/>
            <person name="Sako M."/>
            <person name="Kawa K."/>
            <person name="Ishii E."/>
            <person name="Miura I."/>
            <person name="Yanagisawa M."/>
            <person name="Hayashi Y."/>
        </authorList>
    </citation>
    <scope>NUCLEOTIDE SEQUENCE [MRNA] (ISOFORM 2)</scope>
</reference>
<reference key="3">
    <citation type="journal article" date="2005" name="Science">
        <title>The transcriptional landscape of the mammalian genome.</title>
        <authorList>
            <person name="Carninci P."/>
            <person name="Kasukawa T."/>
            <person name="Katayama S."/>
            <person name="Gough J."/>
            <person name="Frith M.C."/>
            <person name="Maeda N."/>
            <person name="Oyama R."/>
            <person name="Ravasi T."/>
            <person name="Lenhard B."/>
            <person name="Wells C."/>
            <person name="Kodzius R."/>
            <person name="Shimokawa K."/>
            <person name="Bajic V.B."/>
            <person name="Brenner S.E."/>
            <person name="Batalov S."/>
            <person name="Forrest A.R."/>
            <person name="Zavolan M."/>
            <person name="Davis M.J."/>
            <person name="Wilming L.G."/>
            <person name="Aidinis V."/>
            <person name="Allen J.E."/>
            <person name="Ambesi-Impiombato A."/>
            <person name="Apweiler R."/>
            <person name="Aturaliya R.N."/>
            <person name="Bailey T.L."/>
            <person name="Bansal M."/>
            <person name="Baxter L."/>
            <person name="Beisel K.W."/>
            <person name="Bersano T."/>
            <person name="Bono H."/>
            <person name="Chalk A.M."/>
            <person name="Chiu K.P."/>
            <person name="Choudhary V."/>
            <person name="Christoffels A."/>
            <person name="Clutterbuck D.R."/>
            <person name="Crowe M.L."/>
            <person name="Dalla E."/>
            <person name="Dalrymple B.P."/>
            <person name="de Bono B."/>
            <person name="Della Gatta G."/>
            <person name="di Bernardo D."/>
            <person name="Down T."/>
            <person name="Engstrom P."/>
            <person name="Fagiolini M."/>
            <person name="Faulkner G."/>
            <person name="Fletcher C.F."/>
            <person name="Fukushima T."/>
            <person name="Furuno M."/>
            <person name="Futaki S."/>
            <person name="Gariboldi M."/>
            <person name="Georgii-Hemming P."/>
            <person name="Gingeras T.R."/>
            <person name="Gojobori T."/>
            <person name="Green R.E."/>
            <person name="Gustincich S."/>
            <person name="Harbers M."/>
            <person name="Hayashi Y."/>
            <person name="Hensch T.K."/>
            <person name="Hirokawa N."/>
            <person name="Hill D."/>
            <person name="Huminiecki L."/>
            <person name="Iacono M."/>
            <person name="Ikeo K."/>
            <person name="Iwama A."/>
            <person name="Ishikawa T."/>
            <person name="Jakt M."/>
            <person name="Kanapin A."/>
            <person name="Katoh M."/>
            <person name="Kawasawa Y."/>
            <person name="Kelso J."/>
            <person name="Kitamura H."/>
            <person name="Kitano H."/>
            <person name="Kollias G."/>
            <person name="Krishnan S.P."/>
            <person name="Kruger A."/>
            <person name="Kummerfeld S.K."/>
            <person name="Kurochkin I.V."/>
            <person name="Lareau L.F."/>
            <person name="Lazarevic D."/>
            <person name="Lipovich L."/>
            <person name="Liu J."/>
            <person name="Liuni S."/>
            <person name="McWilliam S."/>
            <person name="Madan Babu M."/>
            <person name="Madera M."/>
            <person name="Marchionni L."/>
            <person name="Matsuda H."/>
            <person name="Matsuzawa S."/>
            <person name="Miki H."/>
            <person name="Mignone F."/>
            <person name="Miyake S."/>
            <person name="Morris K."/>
            <person name="Mottagui-Tabar S."/>
            <person name="Mulder N."/>
            <person name="Nakano N."/>
            <person name="Nakauchi H."/>
            <person name="Ng P."/>
            <person name="Nilsson R."/>
            <person name="Nishiguchi S."/>
            <person name="Nishikawa S."/>
            <person name="Nori F."/>
            <person name="Ohara O."/>
            <person name="Okazaki Y."/>
            <person name="Orlando V."/>
            <person name="Pang K.C."/>
            <person name="Pavan W.J."/>
            <person name="Pavesi G."/>
            <person name="Pesole G."/>
            <person name="Petrovsky N."/>
            <person name="Piazza S."/>
            <person name="Reed J."/>
            <person name="Reid J.F."/>
            <person name="Ring B.Z."/>
            <person name="Ringwald M."/>
            <person name="Rost B."/>
            <person name="Ruan Y."/>
            <person name="Salzberg S.L."/>
            <person name="Sandelin A."/>
            <person name="Schneider C."/>
            <person name="Schoenbach C."/>
            <person name="Sekiguchi K."/>
            <person name="Semple C.A."/>
            <person name="Seno S."/>
            <person name="Sessa L."/>
            <person name="Sheng Y."/>
            <person name="Shibata Y."/>
            <person name="Shimada H."/>
            <person name="Shimada K."/>
            <person name="Silva D."/>
            <person name="Sinclair B."/>
            <person name="Sperling S."/>
            <person name="Stupka E."/>
            <person name="Sugiura K."/>
            <person name="Sultana R."/>
            <person name="Takenaka Y."/>
            <person name="Taki K."/>
            <person name="Tammoja K."/>
            <person name="Tan S.L."/>
            <person name="Tang S."/>
            <person name="Taylor M.S."/>
            <person name="Tegner J."/>
            <person name="Teichmann S.A."/>
            <person name="Ueda H.R."/>
            <person name="van Nimwegen E."/>
            <person name="Verardo R."/>
            <person name="Wei C.L."/>
            <person name="Yagi K."/>
            <person name="Yamanishi H."/>
            <person name="Zabarovsky E."/>
            <person name="Zhu S."/>
            <person name="Zimmer A."/>
            <person name="Hide W."/>
            <person name="Bult C."/>
            <person name="Grimmond S.M."/>
            <person name="Teasdale R.D."/>
            <person name="Liu E.T."/>
            <person name="Brusic V."/>
            <person name="Quackenbush J."/>
            <person name="Wahlestedt C."/>
            <person name="Mattick J.S."/>
            <person name="Hume D.A."/>
            <person name="Kai C."/>
            <person name="Sasaki D."/>
            <person name="Tomaru Y."/>
            <person name="Fukuda S."/>
            <person name="Kanamori-Katayama M."/>
            <person name="Suzuki M."/>
            <person name="Aoki J."/>
            <person name="Arakawa T."/>
            <person name="Iida J."/>
            <person name="Imamura K."/>
            <person name="Itoh M."/>
            <person name="Kato T."/>
            <person name="Kawaji H."/>
            <person name="Kawagashira N."/>
            <person name="Kawashima T."/>
            <person name="Kojima M."/>
            <person name="Kondo S."/>
            <person name="Konno H."/>
            <person name="Nakano K."/>
            <person name="Ninomiya N."/>
            <person name="Nishio T."/>
            <person name="Okada M."/>
            <person name="Plessy C."/>
            <person name="Shibata K."/>
            <person name="Shiraki T."/>
            <person name="Suzuki S."/>
            <person name="Tagami M."/>
            <person name="Waki K."/>
            <person name="Watahiki A."/>
            <person name="Okamura-Oho Y."/>
            <person name="Suzuki H."/>
            <person name="Kawai J."/>
            <person name="Hayashizaki Y."/>
        </authorList>
    </citation>
    <scope>NUCLEOTIDE SEQUENCE [LARGE SCALE MRNA] (ISOFORMS 1 AND 5)</scope>
    <source>
        <strain>C57BL/6J</strain>
        <tissue>Bone marrow</tissue>
        <tissue>Diencephalon</tissue>
    </source>
</reference>
<reference key="4">
    <citation type="journal article" date="2004" name="Genome Res.">
        <title>The status, quality, and expansion of the NIH full-length cDNA project: the Mammalian Gene Collection (MGC).</title>
        <authorList>
            <consortium name="The MGC Project Team"/>
        </authorList>
    </citation>
    <scope>NUCLEOTIDE SEQUENCE [LARGE SCALE MRNA] (ISOFORM 3)</scope>
</reference>
<reference key="5">
    <citation type="journal article" date="1995" name="Genes Dev.">
        <title>Abl-interactor-1, a novel SH3 protein binding to the carboxy-terminal portion of the Abl protein, suppresses v-abl transforming activity.</title>
        <authorList>
            <person name="Shi Y."/>
            <person name="Alin K."/>
            <person name="Goff S.P."/>
        </authorList>
    </citation>
    <scope>NUCLEOTIDE SEQUENCE [MRNA] OF 70-360 (ISOFORM 4)</scope>
    <scope>FUNCTION</scope>
    <scope>PHOSPHORYLATION</scope>
    <scope>TISSUE SPECIFICITY</scope>
    <scope>INTERACTION WITH ABL1 AND V-ABL</scope>
</reference>
<reference key="6">
    <citation type="journal article" date="1999" name="Nature">
        <title>EPS8 and E3B1 transduce signals from Ras to Rac.</title>
        <authorList>
            <person name="Scita G."/>
            <person name="Nordstrom J."/>
            <person name="Carbone R."/>
            <person name="Tenca P."/>
            <person name="Giardina G."/>
            <person name="Gutkind S."/>
            <person name="Bjarnegard M."/>
            <person name="Betsholtz C."/>
            <person name="Di Fiore P.P."/>
        </authorList>
    </citation>
    <scope>FUNCTION</scope>
    <scope>IDENTIFICATION IN A COMPLEX WITH EPS8 AND SOS1</scope>
</reference>
<reference key="7">
    <citation type="journal article" date="2003" name="J. Biol. Chem.">
        <title>Abl interactor 1 promotes tyrosine 296 phosphorylation of mammalian enabled (Mena) by c-Abl kinase.</title>
        <authorList>
            <person name="Tani K."/>
            <person name="Sato S."/>
            <person name="Sukezane T."/>
            <person name="Kojima H."/>
            <person name="Hirose H."/>
            <person name="Hanafusa H."/>
            <person name="Shishido T."/>
        </authorList>
    </citation>
    <scope>FUNCTION</scope>
    <scope>INTERACTION WITH ENAH</scope>
</reference>
<reference key="8">
    <citation type="journal article" date="2004" name="Mol. Cell. Biol.">
        <title>Abl interactor 1 (Abi-1) wave-binding and SNARE domains regulate its nucleocytoplasmic shuttling, lamellipodium localization, and wave-1 levels.</title>
        <authorList>
            <person name="Echarri A."/>
            <person name="Lai M.J."/>
            <person name="Robinson M.R."/>
            <person name="Pendergast A.M."/>
        </authorList>
    </citation>
    <scope>FUNCTION</scope>
    <scope>SUBCELLULAR LOCATION</scope>
    <scope>INTERACTION WITH STX1A; SNAP25; VAMP2 AND WASF1</scope>
</reference>
<reference key="9">
    <citation type="journal article" date="2000" name="Mol. Cell. Neurosci.">
        <title>Localization and phosphorylation of Abl-interactor proteins, Abi-1 and Abi-2, in the developing nervous system.</title>
        <authorList>
            <person name="Courtney K.D."/>
            <person name="Grove M."/>
            <person name="Vandongen H."/>
            <person name="Vandongen A."/>
            <person name="LaMantia A.-S."/>
            <person name="Pendergast A.M."/>
        </authorList>
    </citation>
    <scope>TISSUE SPECIFICITY</scope>
    <scope>DEVELOPMENTAL STAGE</scope>
</reference>
<reference key="10">
    <citation type="journal article" date="2001" name="Curr. Biol.">
        <title>The Abl interactor proteins localize to sites of actin polymerization at the tips of lamellipodia and filopodia.</title>
        <authorList>
            <person name="Stradal T.E.B."/>
            <person name="Courtney K.D."/>
            <person name="Rottner K."/>
            <person name="Hahne P."/>
            <person name="Small J.V."/>
            <person name="Pendergast A.M."/>
        </authorList>
    </citation>
    <scope>SUBCELLULAR LOCATION</scope>
</reference>
<reference key="11">
    <citation type="journal article" date="2004" name="EMBO J.">
        <title>Sra-1 and Nap1 link Rac to actin assembly driving lamellipodia formation.</title>
        <authorList>
            <person name="Steffen A."/>
            <person name="Rottner K."/>
            <person name="Ehinger J."/>
            <person name="Innocenti M."/>
            <person name="Scita G."/>
            <person name="Wehland J."/>
            <person name="Stradal T.E.B."/>
        </authorList>
    </citation>
    <scope>COMPONENT OF WAVE2 COMPLEX</scope>
    <source>
        <strain>C57BL/6J</strain>
        <tissue>Brain</tissue>
    </source>
</reference>
<reference key="12">
    <citation type="journal article" date="2004" name="Nat. Cell Biol.">
        <title>Eps8 controls actin-based motility by capping the barbed ends of actin filaments.</title>
        <authorList>
            <person name="Disanza A."/>
            <person name="Carlier M.F."/>
            <person name="Stradal T.E."/>
            <person name="Didry D."/>
            <person name="Frittoli E."/>
            <person name="Confalonieri S."/>
            <person name="Croce A."/>
            <person name="Wehland J."/>
            <person name="Di Fiore P.P."/>
            <person name="Scita G."/>
        </authorList>
    </citation>
    <scope>FUNCTION</scope>
    <scope>INTERACTION WITH EPS8</scope>
</reference>
<reference key="13">
    <citation type="journal article" date="2008" name="J. Proteome Res.">
        <title>Large-scale identification and evolution indexing of tyrosine phosphorylation sites from murine brain.</title>
        <authorList>
            <person name="Ballif B.A."/>
            <person name="Carey G.R."/>
            <person name="Sunyaev S.R."/>
            <person name="Gygi S.P."/>
        </authorList>
    </citation>
    <scope>PHOSPHORYLATION [LARGE SCALE ANALYSIS] AT TYR-428</scope>
    <scope>IDENTIFICATION BY MASS SPECTROMETRY [LARGE SCALE ANALYSIS]</scope>
    <source>
        <tissue>Brain</tissue>
    </source>
</reference>
<reference key="14">
    <citation type="journal article" date="2009" name="Immunity">
        <title>The phagosomal proteome in interferon-gamma-activated macrophages.</title>
        <authorList>
            <person name="Trost M."/>
            <person name="English L."/>
            <person name="Lemieux S."/>
            <person name="Courcelles M."/>
            <person name="Desjardins M."/>
            <person name="Thibault P."/>
        </authorList>
    </citation>
    <scope>PHOSPHORYLATION [LARGE SCALE ANALYSIS] AT SER-183</scope>
    <scope>IDENTIFICATION BY MASS SPECTROMETRY [LARGE SCALE ANALYSIS]</scope>
</reference>
<reference key="15">
    <citation type="journal article" date="2009" name="Mol. Cell. Proteomics">
        <title>Large scale localization of protein phosphorylation by use of electron capture dissociation mass spectrometry.</title>
        <authorList>
            <person name="Sweet S.M."/>
            <person name="Bailey C.M."/>
            <person name="Cunningham D.L."/>
            <person name="Heath J.K."/>
            <person name="Cooper H.J."/>
        </authorList>
    </citation>
    <scope>PHOSPHORYLATION [LARGE SCALE ANALYSIS] AT SER-183 AND TYR-213</scope>
    <scope>IDENTIFICATION BY MASS SPECTROMETRY [LARGE SCALE ANALYSIS]</scope>
    <source>
        <tissue>Embryonic fibroblast</tissue>
    </source>
</reference>
<reference key="16">
    <citation type="journal article" date="2010" name="Cell">
        <title>A tissue-specific atlas of mouse protein phosphorylation and expression.</title>
        <authorList>
            <person name="Huttlin E.L."/>
            <person name="Jedrychowski M.P."/>
            <person name="Elias J.E."/>
            <person name="Goswami T."/>
            <person name="Rad R."/>
            <person name="Beausoleil S.A."/>
            <person name="Villen J."/>
            <person name="Haas W."/>
            <person name="Sowa M.E."/>
            <person name="Gygi S.P."/>
        </authorList>
    </citation>
    <scope>PHOSPHORYLATION [LARGE SCALE ANALYSIS] AT THR-215</scope>
    <scope>IDENTIFICATION BY MASS SPECTROMETRY [LARGE SCALE ANALYSIS]</scope>
    <source>
        <tissue>Brain</tissue>
        <tissue>Brown adipose tissue</tissue>
        <tissue>Kidney</tissue>
        <tissue>Lung</tissue>
        <tissue>Pancreas</tissue>
        <tissue>Spleen</tissue>
        <tissue>Testis</tissue>
    </source>
</reference>
<sequence length="481" mass="52288">MAELQMLLEEEIPSGKRALIESYQNLTRVADYCENNYIQATDKRKALEETKAYTTQSLASVAYQINALANNVLQLLDIQASQLRRMESSINHISQTVDIHKEKVARREIGILTTNKNTSRTHKIIAPANMERPVRYIRKPIDYTVLDDVGHGVKWLKAKHGNNQPARTGTLSRTNPPTQKPPSPPVSGRGTLGRNTPYKTLEPVKPPTVPNDYMTSPARLGSQHSPGRTASLNQRPRTHSGSSGGSGSRENSGSSSIGIPIAVPTPSPPTAGPAAPGAAPGSQYGTMTRQISRHNSTTSSTSSGGYRRTPSVAAQFSAQPHVNGGPLYSQNSISVAPPPPPMPQLTPQIPLTGFVARVQENIADSPTPPPPPPPDDIPMFDDSPPPPPPPPVDYEDEEAAVVQYSDPYADGDPAWAPKNYIEKVVAIYDYTKDKDDELSFKEGAIIYVIKKNDDGWFEGVCNRVTGLFPGNYVESIMHYTD</sequence>
<name>ABI1_MOUSE</name>
<organism>
    <name type="scientific">Mus musculus</name>
    <name type="common">Mouse</name>
    <dbReference type="NCBI Taxonomy" id="10090"/>
    <lineage>
        <taxon>Eukaryota</taxon>
        <taxon>Metazoa</taxon>
        <taxon>Chordata</taxon>
        <taxon>Craniata</taxon>
        <taxon>Vertebrata</taxon>
        <taxon>Euteleostomi</taxon>
        <taxon>Mammalia</taxon>
        <taxon>Eutheria</taxon>
        <taxon>Euarchontoglires</taxon>
        <taxon>Glires</taxon>
        <taxon>Rodentia</taxon>
        <taxon>Myomorpha</taxon>
        <taxon>Muroidea</taxon>
        <taxon>Muridae</taxon>
        <taxon>Murinae</taxon>
        <taxon>Mus</taxon>
        <taxon>Mus</taxon>
    </lineage>
</organism>